<organism>
    <name type="scientific">Salmonella paratyphi A (strain ATCC 9150 / SARB42)</name>
    <dbReference type="NCBI Taxonomy" id="295319"/>
    <lineage>
        <taxon>Bacteria</taxon>
        <taxon>Pseudomonadati</taxon>
        <taxon>Pseudomonadota</taxon>
        <taxon>Gammaproteobacteria</taxon>
        <taxon>Enterobacterales</taxon>
        <taxon>Enterobacteriaceae</taxon>
        <taxon>Salmonella</taxon>
    </lineage>
</organism>
<protein>
    <recommendedName>
        <fullName evidence="1">Chromosome partition protein MukB</fullName>
    </recommendedName>
    <alternativeName>
        <fullName evidence="1">Structural maintenance of chromosome-related protein</fullName>
    </alternativeName>
</protein>
<name>MUKB_SALPA</name>
<evidence type="ECO:0000255" key="1">
    <source>
        <dbReference type="HAMAP-Rule" id="MF_01800"/>
    </source>
</evidence>
<evidence type="ECO:0000256" key="2">
    <source>
        <dbReference type="SAM" id="MobiDB-lite"/>
    </source>
</evidence>
<feature type="chain" id="PRO_0000068225" description="Chromosome partition protein MukB">
    <location>
        <begin position="1"/>
        <end position="1488"/>
    </location>
</feature>
<feature type="region of interest" description="Flexible hinge" evidence="1">
    <location>
        <begin position="666"/>
        <end position="783"/>
    </location>
</feature>
<feature type="region of interest" description="Disordered" evidence="2">
    <location>
        <begin position="1049"/>
        <end position="1074"/>
    </location>
</feature>
<feature type="coiled-coil region" evidence="1">
    <location>
        <begin position="326"/>
        <end position="418"/>
    </location>
</feature>
<feature type="coiled-coil region" evidence="1">
    <location>
        <begin position="444"/>
        <end position="472"/>
    </location>
</feature>
<feature type="coiled-coil region" evidence="1">
    <location>
        <begin position="509"/>
        <end position="602"/>
    </location>
</feature>
<feature type="coiled-coil region" evidence="1">
    <location>
        <begin position="835"/>
        <end position="923"/>
    </location>
</feature>
<feature type="coiled-coil region" evidence="1">
    <location>
        <begin position="977"/>
        <end position="1116"/>
    </location>
</feature>
<feature type="coiled-coil region" evidence="1">
    <location>
        <begin position="1209"/>
        <end position="1265"/>
    </location>
</feature>
<feature type="compositionally biased region" description="Basic and acidic residues" evidence="2">
    <location>
        <begin position="1051"/>
        <end position="1065"/>
    </location>
</feature>
<feature type="binding site" evidence="1">
    <location>
        <begin position="34"/>
        <end position="41"/>
    </location>
    <ligand>
        <name>ATP</name>
        <dbReference type="ChEBI" id="CHEBI:30616"/>
    </ligand>
</feature>
<proteinExistence type="inferred from homology"/>
<dbReference type="EMBL" id="CP000026">
    <property type="protein sequence ID" value="AAV77720.1"/>
    <property type="molecule type" value="Genomic_DNA"/>
</dbReference>
<dbReference type="RefSeq" id="WP_000572734.1">
    <property type="nucleotide sequence ID" value="NC_006511.1"/>
</dbReference>
<dbReference type="SMR" id="Q5PGG1"/>
<dbReference type="KEGG" id="spt:SPA1804"/>
<dbReference type="HOGENOM" id="CLU_004430_0_0_6"/>
<dbReference type="Proteomes" id="UP000008185">
    <property type="component" value="Chromosome"/>
</dbReference>
<dbReference type="GO" id="GO:0005737">
    <property type="term" value="C:cytoplasm"/>
    <property type="evidence" value="ECO:0007669"/>
    <property type="project" value="UniProtKB-UniRule"/>
</dbReference>
<dbReference type="GO" id="GO:0009295">
    <property type="term" value="C:nucleoid"/>
    <property type="evidence" value="ECO:0007669"/>
    <property type="project" value="UniProtKB-SubCell"/>
</dbReference>
<dbReference type="GO" id="GO:0005524">
    <property type="term" value="F:ATP binding"/>
    <property type="evidence" value="ECO:0007669"/>
    <property type="project" value="UniProtKB-UniRule"/>
</dbReference>
<dbReference type="GO" id="GO:0003677">
    <property type="term" value="F:DNA binding"/>
    <property type="evidence" value="ECO:0007669"/>
    <property type="project" value="UniProtKB-UniRule"/>
</dbReference>
<dbReference type="GO" id="GO:0051301">
    <property type="term" value="P:cell division"/>
    <property type="evidence" value="ECO:0007669"/>
    <property type="project" value="UniProtKB-KW"/>
</dbReference>
<dbReference type="GO" id="GO:0030261">
    <property type="term" value="P:chromosome condensation"/>
    <property type="evidence" value="ECO:0007669"/>
    <property type="project" value="UniProtKB-KW"/>
</dbReference>
<dbReference type="GO" id="GO:0007059">
    <property type="term" value="P:chromosome segregation"/>
    <property type="evidence" value="ECO:0007669"/>
    <property type="project" value="UniProtKB-UniRule"/>
</dbReference>
<dbReference type="GO" id="GO:0006260">
    <property type="term" value="P:DNA replication"/>
    <property type="evidence" value="ECO:0007669"/>
    <property type="project" value="UniProtKB-UniRule"/>
</dbReference>
<dbReference type="FunFam" id="1.20.58.850:FF:000001">
    <property type="entry name" value="Chromosome partition protein MukB"/>
    <property type="match status" value="1"/>
</dbReference>
<dbReference type="FunFam" id="3.30.70.3500:FF:000001">
    <property type="entry name" value="Chromosome partition protein MukB"/>
    <property type="match status" value="1"/>
</dbReference>
<dbReference type="FunFam" id="3.40.1140.10:FF:000001">
    <property type="entry name" value="Chromosome partition protein MukB"/>
    <property type="match status" value="1"/>
</dbReference>
<dbReference type="FunFam" id="3.40.1140.10:FF:000002">
    <property type="entry name" value="Chromosome partition protein MukB"/>
    <property type="match status" value="1"/>
</dbReference>
<dbReference type="Gene3D" id="1.20.58.850">
    <property type="match status" value="1"/>
</dbReference>
<dbReference type="Gene3D" id="3.40.1140.10">
    <property type="match status" value="2"/>
</dbReference>
<dbReference type="Gene3D" id="1.20.5.420">
    <property type="entry name" value="Immunoglobulin FC, subunit C"/>
    <property type="match status" value="1"/>
</dbReference>
<dbReference type="Gene3D" id="3.30.70.3500">
    <property type="entry name" value="MukB, hinge domain"/>
    <property type="match status" value="1"/>
</dbReference>
<dbReference type="HAMAP" id="MF_01800">
    <property type="entry name" value="MukB"/>
    <property type="match status" value="1"/>
</dbReference>
<dbReference type="InterPro" id="IPR012090">
    <property type="entry name" value="MukB"/>
</dbReference>
<dbReference type="InterPro" id="IPR050308">
    <property type="entry name" value="MukB/SMC"/>
</dbReference>
<dbReference type="InterPro" id="IPR032520">
    <property type="entry name" value="MukB_hinge"/>
</dbReference>
<dbReference type="InterPro" id="IPR042501">
    <property type="entry name" value="MukB_hinge_sf"/>
</dbReference>
<dbReference type="InterPro" id="IPR007406">
    <property type="entry name" value="MukB_N_dom"/>
</dbReference>
<dbReference type="InterPro" id="IPR027417">
    <property type="entry name" value="P-loop_NTPase"/>
</dbReference>
<dbReference type="NCBIfam" id="NF003422">
    <property type="entry name" value="PRK04863.1"/>
    <property type="match status" value="1"/>
</dbReference>
<dbReference type="PANTHER" id="PTHR42963">
    <property type="entry name" value="CHROMOSOME PARTITION PROTEIN MUKB"/>
    <property type="match status" value="1"/>
</dbReference>
<dbReference type="PANTHER" id="PTHR42963:SF1">
    <property type="entry name" value="DUF4476 DOMAIN-CONTAINING PROTEIN"/>
    <property type="match status" value="1"/>
</dbReference>
<dbReference type="Pfam" id="PF04310">
    <property type="entry name" value="MukB"/>
    <property type="match status" value="1"/>
</dbReference>
<dbReference type="Pfam" id="PF16330">
    <property type="entry name" value="MukB_hinge"/>
    <property type="match status" value="1"/>
</dbReference>
<dbReference type="Pfam" id="PF13558">
    <property type="entry name" value="SbcC_Walker_B"/>
    <property type="match status" value="1"/>
</dbReference>
<dbReference type="PIRSF" id="PIRSF005246">
    <property type="entry name" value="MukB"/>
    <property type="match status" value="1"/>
</dbReference>
<dbReference type="SUPFAM" id="SSF52540">
    <property type="entry name" value="P-loop containing nucleoside triphosphate hydrolases"/>
    <property type="match status" value="2"/>
</dbReference>
<sequence length="1488" mass="170030">MIERGKFRSLTLINWNGFFARTFDLDELVTTLSGGNGAGKSTTMAAFVTALIPDLTLLHFRNTTEAGATSGSRDKGLHGKLKAGVCYSMLDTINSRHQRVVVGVRLQQVAGRDRKVDIKPFAIQGLPMSVQPTQLVTETLNERQARVLSLAELKDKLDEMEGVQFKQFNSITDYHSLMFDLGIIARRLRSASDRSKFYRLIEASLYGGISSAITRSLRDYLLPENSGVRKAFQDMEAALRENRLTLEAIRVTQSDRDLFKHLISEATDYVAADYMRHANERRVHLDQALAFRRELYTSRKQLAAEQYKHVDMARELGEHNGAEGSLEADYQAASDHLNLVQTALRQQEKIERYEADLEELQIRLEEQNEVVAEAAEMQDENEARAEAAELEVDELKSQLADYQQALDVQQTRAIQYNQAISALARAKELCHLPDLTPESAAEWLDTFQAKEQEATEKLLSLEQKMSVAQTAHSQFEQAYQLVAAINGPLARSEAWDVARELLRDGVNQRHLAEQVQPLRMRLSELEQRLREQQEAERLLAEFCKRQGKNFDIDELEALHQELEARIASLSDSVSSASEQRMALRQEQEQLQSRIQHLMQRAPVWLAAQNSLNQLSEQCGEEFTSSQEVTEYLQQLLEREREAIVERDEVGARKNAVDEEIERLSQPGGAEDQRLNALAERFGGVLLSEIYDDVSLEDAPYFSALYGPSRHAIVVPDLSQIAEQLEGLTDCPEDLYLIEGDPQSFDDSVFSVDELEKAVVVKIADRQWRYSRFPSLPIFGRAARENRIESLHAEREVLSERFATLSFDVQKTQRLHQAFSRFIGSHLSVAFEDDPEAEIRRLNGRRVELERALATHESDNQQQRLQFEQAKEGVSALNRLLPRLNLLADETLADRGDEIQERLDEAQEAARFVQQYGNQLAKLEPVVSVLQSDPEQFEQLKEDYAWSQQMQRDARQQAFALAEVVERRAHFSYSDSAEMLSGNSDLNEKLRQRLEQAEAERTRAREALRSHAAQLSQYSQVLVSLKSSYDTKKELLNDLQRELQDIGVRADSGAEERARQRRDELHAQLSNNRSRRNQLEKALTFCEAEMENLTRKLRKLERDYHEMREQVVTAKAGWCAVMRMVKDNGVERRLHRRELAYLSADELRSMSDKALGALRLAVADNEHLRDVLRLSEDPKRPERKIQFFVAVYQHLRERIRQDIIRTDDPVEAIEQMEIELSRLTEELTSREQKLAISSRSVANIIRKTIQREQNRIRMLNQGLQSVSFGQVNSVRLNVNVRETHATLLDVLSEQQEQHQDLFNSNRLTFSEALAKLYQRLNPQIDMGQRTPQTIGEELLDYRNYLEMEVEVNRGSDGWLRAESGALSTGEAIGTGMSILVMVVQSWEDEARRLRGKDISPCRLLFLDEAARLDARSIATLFELCERLQMQLIIAAPENISPEKGTTYKLVRKVFQNTEHVHVVGLRGFAPQLPETLPGTQTEDTPSEAS</sequence>
<comment type="function">
    <text evidence="1">Plays a central role in chromosome condensation, segregation and cell cycle progression. Functions as a homodimer, which is essential for chromosome partition. Involved in negative DNA supercoiling in vivo, and by this means organize and compact chromosomes. May achieve or facilitate chromosome segregation by condensation DNA from both sides of a centrally located replisome during cell division.</text>
</comment>
<comment type="subunit">
    <text evidence="1">Homodimerization via its hinge domain. Binds to DNA via its C-terminal region. Interacts, and probably forms a ternary complex, with MukE and MukF via its C-terminal region. The complex formation is stimulated by calcium or magnesium. Interacts with tubulin-related protein FtsZ.</text>
</comment>
<comment type="subcellular location">
    <subcellularLocation>
        <location evidence="1">Cytoplasm</location>
        <location evidence="1">Nucleoid</location>
    </subcellularLocation>
    <text evidence="1">Restricted to the nucleoid region.</text>
</comment>
<comment type="domain">
    <text evidence="1">The hinge domain, which separates the large intramolecular coiled coil regions, allows the homodimerization, forming a V-shaped homodimer.</text>
</comment>
<comment type="similarity">
    <text evidence="1">Belongs to the SMC family. MukB subfamily.</text>
</comment>
<accession>Q5PGG1</accession>
<keyword id="KW-0067">ATP-binding</keyword>
<keyword id="KW-0131">Cell cycle</keyword>
<keyword id="KW-0132">Cell division</keyword>
<keyword id="KW-0159">Chromosome partition</keyword>
<keyword id="KW-0175">Coiled coil</keyword>
<keyword id="KW-0963">Cytoplasm</keyword>
<keyword id="KW-0226">DNA condensation</keyword>
<keyword id="KW-0238">DNA-binding</keyword>
<keyword id="KW-0547">Nucleotide-binding</keyword>
<reference key="1">
    <citation type="journal article" date="2004" name="Nat. Genet.">
        <title>Comparison of genome degradation in Paratyphi A and Typhi, human-restricted serovars of Salmonella enterica that cause typhoid.</title>
        <authorList>
            <person name="McClelland M."/>
            <person name="Sanderson K.E."/>
            <person name="Clifton S.W."/>
            <person name="Latreille P."/>
            <person name="Porwollik S."/>
            <person name="Sabo A."/>
            <person name="Meyer R."/>
            <person name="Bieri T."/>
            <person name="Ozersky P."/>
            <person name="McLellan M."/>
            <person name="Harkins C.R."/>
            <person name="Wang C."/>
            <person name="Nguyen C."/>
            <person name="Berghoff A."/>
            <person name="Elliott G."/>
            <person name="Kohlberg S."/>
            <person name="Strong C."/>
            <person name="Du F."/>
            <person name="Carter J."/>
            <person name="Kremizki C."/>
            <person name="Layman D."/>
            <person name="Leonard S."/>
            <person name="Sun H."/>
            <person name="Fulton L."/>
            <person name="Nash W."/>
            <person name="Miner T."/>
            <person name="Minx P."/>
            <person name="Delehaunty K."/>
            <person name="Fronick C."/>
            <person name="Magrini V."/>
            <person name="Nhan M."/>
            <person name="Warren W."/>
            <person name="Florea L."/>
            <person name="Spieth J."/>
            <person name="Wilson R.K."/>
        </authorList>
    </citation>
    <scope>NUCLEOTIDE SEQUENCE [LARGE SCALE GENOMIC DNA]</scope>
    <source>
        <strain>ATCC 9150 / SARB42</strain>
    </source>
</reference>
<gene>
    <name evidence="1" type="primary">mukB</name>
    <name type="ordered locus">SPA1804</name>
</gene>